<proteinExistence type="inferred from homology"/>
<comment type="function">
    <text evidence="1">Component of the type II secretion system required for the energy-dependent secretion of extracellular factors such as proteases and toxins from the periplasm. Part of the pseudopilus tip complex that is critical for the recognition and binding of secretion substrates.</text>
</comment>
<comment type="subunit">
    <text evidence="1">Type II secretion is composed of four main components: the outer membrane complex, the inner membrane complex, the cytoplasmic secretion ATPase and the periplasm-spanning pseudopilus. Interacts with core component OutG.</text>
</comment>
<comment type="subcellular location">
    <subcellularLocation>
        <location evidence="1">Cell inner membrane</location>
        <topology evidence="2">Single-pass membrane protein</topology>
    </subcellularLocation>
</comment>
<comment type="PTM">
    <text evidence="1">Cleaved by prepilin peptidase.</text>
</comment>
<comment type="PTM">
    <text evidence="1">Methylated by prepilin peptidase at the amino group of the N-terminal phenylalanine once the leader sequence is cleaved by prepilin peptidase.</text>
</comment>
<comment type="similarity">
    <text evidence="4">Belongs to the GSP H family.</text>
</comment>
<accession>P24687</accession>
<feature type="propeptide" id="PRO_0000024220" description="Leader sequence" evidence="3">
    <location>
        <begin position="1"/>
        <end position="5"/>
    </location>
</feature>
<feature type="chain" id="PRO_0000024221" description="Type II secretion system protein H">
    <location>
        <begin position="6"/>
        <end position="181"/>
    </location>
</feature>
<feature type="transmembrane region" description="Helical" evidence="4">
    <location>
        <begin position="6"/>
        <end position="29"/>
    </location>
</feature>
<feature type="modified residue" description="N-methylphenylalanine" evidence="3">
    <location>
        <position position="6"/>
    </location>
</feature>
<organism>
    <name type="scientific">Dickeya chrysanthemi</name>
    <name type="common">Pectobacterium chrysanthemi</name>
    <name type="synonym">Erwinia chrysanthemi</name>
    <dbReference type="NCBI Taxonomy" id="556"/>
    <lineage>
        <taxon>Bacteria</taxon>
        <taxon>Pseudomonadati</taxon>
        <taxon>Pseudomonadota</taxon>
        <taxon>Gammaproteobacteria</taxon>
        <taxon>Enterobacterales</taxon>
        <taxon>Pectobacteriaceae</taxon>
        <taxon>Dickeya</taxon>
    </lineage>
</organism>
<reference key="1">
    <citation type="journal article" date="1992" name="J. Bacteriol.">
        <title>Analysis of eight out genes in a cluster required for pectic enzyme secretion by Erwinia chrysanthemi: sequence comparison with secretion genes from other Gram-negative bacteria.</title>
        <authorList>
            <person name="Lindeberg M."/>
            <person name="Collmer A."/>
        </authorList>
    </citation>
    <scope>NUCLEOTIDE SEQUENCE [GENOMIC DNA]</scope>
    <source>
        <strain>EC16</strain>
    </source>
</reference>
<reference key="2">
    <citation type="journal article" date="1991" name="Proc. Natl. Acad. Sci. U.S.A.">
        <title>Cloned Erwinia chrysanthemi out genes enable Escherichia coli to selectively secrete a diverse family of heterologous proteins to its milieu.</title>
        <authorList>
            <person name="He S.Y."/>
            <person name="Lindeberg M."/>
            <person name="Chatterjee A.K."/>
            <person name="Collmer A."/>
        </authorList>
    </citation>
    <scope>NUCLEOTIDE SEQUENCE [GENOMIC DNA] OF 85-181</scope>
    <source>
        <strain>EC16</strain>
    </source>
</reference>
<keyword id="KW-0997">Cell inner membrane</keyword>
<keyword id="KW-1003">Cell membrane</keyword>
<keyword id="KW-0472">Membrane</keyword>
<keyword id="KW-0488">Methylation</keyword>
<keyword id="KW-0653">Protein transport</keyword>
<keyword id="KW-0812">Transmembrane</keyword>
<keyword id="KW-1133">Transmembrane helix</keyword>
<keyword id="KW-0813">Transport</keyword>
<dbReference type="EMBL" id="L02214">
    <property type="protein sequence ID" value="AAA24835.1"/>
    <property type="molecule type" value="Genomic_DNA"/>
</dbReference>
<dbReference type="EMBL" id="M37886">
    <property type="protein sequence ID" value="AAA24826.1"/>
    <property type="molecule type" value="Genomic_DNA"/>
</dbReference>
<dbReference type="PIR" id="F47021">
    <property type="entry name" value="F47021"/>
</dbReference>
<dbReference type="SMR" id="P24687"/>
<dbReference type="GO" id="GO:0005886">
    <property type="term" value="C:plasma membrane"/>
    <property type="evidence" value="ECO:0007669"/>
    <property type="project" value="UniProtKB-SubCell"/>
</dbReference>
<dbReference type="GO" id="GO:0015627">
    <property type="term" value="C:type II protein secretion system complex"/>
    <property type="evidence" value="ECO:0007669"/>
    <property type="project" value="InterPro"/>
</dbReference>
<dbReference type="GO" id="GO:0015628">
    <property type="term" value="P:protein secretion by the type II secretion system"/>
    <property type="evidence" value="ECO:0007669"/>
    <property type="project" value="InterPro"/>
</dbReference>
<dbReference type="Gene3D" id="3.55.40.10">
    <property type="entry name" value="minor pseudopilin epsh domain"/>
    <property type="match status" value="1"/>
</dbReference>
<dbReference type="InterPro" id="IPR012902">
    <property type="entry name" value="N_methyl_site"/>
</dbReference>
<dbReference type="InterPro" id="IPR045584">
    <property type="entry name" value="Pilin-like"/>
</dbReference>
<dbReference type="InterPro" id="IPR002416">
    <property type="entry name" value="T2SS_protein-GspH"/>
</dbReference>
<dbReference type="InterPro" id="IPR049875">
    <property type="entry name" value="TypeII_GspH"/>
</dbReference>
<dbReference type="NCBIfam" id="TIGR02532">
    <property type="entry name" value="IV_pilin_GFxxxE"/>
    <property type="match status" value="1"/>
</dbReference>
<dbReference type="NCBIfam" id="TIGR01708">
    <property type="entry name" value="typeII_sec_gspH"/>
    <property type="match status" value="1"/>
</dbReference>
<dbReference type="Pfam" id="PF07963">
    <property type="entry name" value="N_methyl"/>
    <property type="match status" value="1"/>
</dbReference>
<dbReference type="PRINTS" id="PR00885">
    <property type="entry name" value="BCTERIALGSPH"/>
</dbReference>
<dbReference type="SUPFAM" id="SSF54523">
    <property type="entry name" value="Pili subunits"/>
    <property type="match status" value="1"/>
</dbReference>
<dbReference type="PROSITE" id="PS00409">
    <property type="entry name" value="PROKAR_NTER_METHYL"/>
    <property type="match status" value="1"/>
</dbReference>
<protein>
    <recommendedName>
        <fullName>Type II secretion system protein H</fullName>
        <shortName>T2SS minor pseudopilin H</shortName>
    </recommendedName>
    <alternativeName>
        <fullName>General secretion pathway protein H</fullName>
    </alternativeName>
    <alternativeName>
        <fullName>Pectic enzymes secretion protein OutH</fullName>
    </alternativeName>
</protein>
<name>GSPH_DICCH</name>
<evidence type="ECO:0000250" key="1">
    <source>
        <dbReference type="UniProtKB" id="Q00515"/>
    </source>
</evidence>
<evidence type="ECO:0000255" key="2"/>
<evidence type="ECO:0000255" key="3">
    <source>
        <dbReference type="PROSITE-ProRule" id="PRU01070"/>
    </source>
</evidence>
<evidence type="ECO:0000305" key="4"/>
<sequence length="181" mass="20288">MRQRGFTLLEIMLVVLLAGVAATLVMMAIPAPKQQDSGWQIARFKAQLQYAVEDSQMNDHILGIYIQPHRWQYALLQRQVVENSPEEQQRLRYVWIPWQPYRMSVPSELPDSFHIELSTQVGAAGDGTGFSPGNGDPHVLILPGGEVTPFRLTLRNGNDSAWLQVDTNGQVHTSPEAEQKG</sequence>
<gene>
    <name type="primary">outH</name>
</gene>